<organism>
    <name type="scientific">Homo sapiens</name>
    <name type="common">Human</name>
    <dbReference type="NCBI Taxonomy" id="9606"/>
    <lineage>
        <taxon>Eukaryota</taxon>
        <taxon>Metazoa</taxon>
        <taxon>Chordata</taxon>
        <taxon>Craniata</taxon>
        <taxon>Vertebrata</taxon>
        <taxon>Euteleostomi</taxon>
        <taxon>Mammalia</taxon>
        <taxon>Eutheria</taxon>
        <taxon>Euarchontoglires</taxon>
        <taxon>Primates</taxon>
        <taxon>Haplorrhini</taxon>
        <taxon>Catarrhini</taxon>
        <taxon>Hominidae</taxon>
        <taxon>Homo</taxon>
    </lineage>
</organism>
<comment type="miscellaneous">
    <text evidence="1">Primate-specific FAM90A gene family, thought to have arisen during multiple duplication and rearrangement events.</text>
</comment>
<comment type="similarity">
    <text evidence="3">Belongs to the FAM90 family.</text>
</comment>
<reference key="1">
    <citation type="journal article" date="2006" name="Nature">
        <title>DNA sequence and analysis of human chromosome 8.</title>
        <authorList>
            <person name="Nusbaum C."/>
            <person name="Mikkelsen T.S."/>
            <person name="Zody M.C."/>
            <person name="Asakawa S."/>
            <person name="Taudien S."/>
            <person name="Garber M."/>
            <person name="Kodira C.D."/>
            <person name="Schueler M.G."/>
            <person name="Shimizu A."/>
            <person name="Whittaker C.A."/>
            <person name="Chang J.L."/>
            <person name="Cuomo C.A."/>
            <person name="Dewar K."/>
            <person name="FitzGerald M.G."/>
            <person name="Yang X."/>
            <person name="Allen N.R."/>
            <person name="Anderson S."/>
            <person name="Asakawa T."/>
            <person name="Blechschmidt K."/>
            <person name="Bloom T."/>
            <person name="Borowsky M.L."/>
            <person name="Butler J."/>
            <person name="Cook A."/>
            <person name="Corum B."/>
            <person name="DeArellano K."/>
            <person name="DeCaprio D."/>
            <person name="Dooley K.T."/>
            <person name="Dorris L. III"/>
            <person name="Engels R."/>
            <person name="Gloeckner G."/>
            <person name="Hafez N."/>
            <person name="Hagopian D.S."/>
            <person name="Hall J.L."/>
            <person name="Ishikawa S.K."/>
            <person name="Jaffe D.B."/>
            <person name="Kamat A."/>
            <person name="Kudoh J."/>
            <person name="Lehmann R."/>
            <person name="Lokitsang T."/>
            <person name="Macdonald P."/>
            <person name="Major J.E."/>
            <person name="Matthews C.D."/>
            <person name="Mauceli E."/>
            <person name="Menzel U."/>
            <person name="Mihalev A.H."/>
            <person name="Minoshima S."/>
            <person name="Murayama Y."/>
            <person name="Naylor J.W."/>
            <person name="Nicol R."/>
            <person name="Nguyen C."/>
            <person name="O'Leary S.B."/>
            <person name="O'Neill K."/>
            <person name="Parker S.C.J."/>
            <person name="Polley A."/>
            <person name="Raymond C.K."/>
            <person name="Reichwald K."/>
            <person name="Rodriguez J."/>
            <person name="Sasaki T."/>
            <person name="Schilhabel M."/>
            <person name="Siddiqui R."/>
            <person name="Smith C.L."/>
            <person name="Sneddon T.P."/>
            <person name="Talamas J.A."/>
            <person name="Tenzin P."/>
            <person name="Topham K."/>
            <person name="Venkataraman V."/>
            <person name="Wen G."/>
            <person name="Yamazaki S."/>
            <person name="Young S.K."/>
            <person name="Zeng Q."/>
            <person name="Zimmer A.R."/>
            <person name="Rosenthal A."/>
            <person name="Birren B.W."/>
            <person name="Platzer M."/>
            <person name="Shimizu N."/>
            <person name="Lander E.S."/>
        </authorList>
    </citation>
    <scope>NUCLEOTIDE SEQUENCE [LARGE SCALE GENOMIC DNA]</scope>
</reference>
<reference key="2">
    <citation type="journal article" date="2007" name="Hum. Mol. Genet.">
        <title>Characterization and evolution of the novel gene family FAM90A in primates originated by multiple duplication and rearrangement events.</title>
        <authorList>
            <person name="Bosch N."/>
            <person name="Caceres M."/>
            <person name="Cardone M.F."/>
            <person name="Carreras A."/>
            <person name="Ballana E."/>
            <person name="Rocchi M."/>
            <person name="Armengol L."/>
            <person name="Estivill X."/>
        </authorList>
    </citation>
    <scope>CHARACTERIZATION</scope>
</reference>
<keyword id="KW-1185">Reference proteome</keyword>
<proteinExistence type="evidence at protein level"/>
<protein>
    <recommendedName>
        <fullName>Protein FAM90A15</fullName>
    </recommendedName>
</protein>
<feature type="chain" id="PRO_0000344454" description="Protein FAM90A15">
    <location>
        <begin position="1"/>
        <end position="464"/>
    </location>
</feature>
<feature type="region of interest" description="Disordered" evidence="2">
    <location>
        <begin position="1"/>
        <end position="42"/>
    </location>
</feature>
<feature type="region of interest" description="Disordered" evidence="2">
    <location>
        <begin position="70"/>
        <end position="389"/>
    </location>
</feature>
<feature type="region of interest" description="Disordered" evidence="2">
    <location>
        <begin position="415"/>
        <end position="437"/>
    </location>
</feature>
<feature type="compositionally biased region" description="Basic and acidic residues" evidence="2">
    <location>
        <begin position="74"/>
        <end position="89"/>
    </location>
</feature>
<feature type="compositionally biased region" description="Basic and acidic residues" evidence="2">
    <location>
        <begin position="97"/>
        <end position="114"/>
    </location>
</feature>
<feature type="compositionally biased region" description="Low complexity" evidence="2">
    <location>
        <begin position="180"/>
        <end position="197"/>
    </location>
</feature>
<name>F90AF_HUMAN</name>
<accession>P0C7V4</accession>
<dbReference type="EMBL" id="AF228730">
    <property type="status" value="NOT_ANNOTATED_CDS"/>
    <property type="molecule type" value="Genomic_DNA"/>
</dbReference>
<dbReference type="RefSeq" id="NP_001410467.1">
    <property type="nucleotide sequence ID" value="NM_001423538.1"/>
</dbReference>
<dbReference type="iPTMnet" id="P0C7V4"/>
<dbReference type="PhosphoSitePlus" id="P0C7V4"/>
<dbReference type="BioMuta" id="HGNC:32263"/>
<dbReference type="MassIVE" id="P0C7V4"/>
<dbReference type="Ensembl" id="ENST00000514465.1">
    <property type="protein sequence ID" value="ENSP00000514261.1"/>
    <property type="gene ID" value="ENSG00000230045.4"/>
</dbReference>
<dbReference type="GeneID" id="389630"/>
<dbReference type="MANE-Select" id="ENST00000514465.1">
    <property type="protein sequence ID" value="ENSP00000514261.1"/>
    <property type="RefSeq nucleotide sequence ID" value="NM_001423538.1"/>
    <property type="RefSeq protein sequence ID" value="NP_001410467.1"/>
</dbReference>
<dbReference type="AGR" id="HGNC:32263"/>
<dbReference type="GeneCards" id="FAM90A15"/>
<dbReference type="HGNC" id="HGNC:32263">
    <property type="gene designation" value="FAM90A15"/>
</dbReference>
<dbReference type="HPA" id="ENSG00000230045">
    <property type="expression patterns" value="Not detected"/>
</dbReference>
<dbReference type="MIM" id="613051">
    <property type="type" value="gene"/>
</dbReference>
<dbReference type="neXtProt" id="NX_P0C7V4"/>
<dbReference type="PharmGKB" id="PA142671810"/>
<dbReference type="GeneTree" id="ENSGT00910000144208"/>
<dbReference type="InParanoid" id="P0C7V4"/>
<dbReference type="PAN-GO" id="P0C7V4">
    <property type="GO annotations" value="0 GO annotations based on evolutionary models"/>
</dbReference>
<dbReference type="PhylomeDB" id="P0C7V4"/>
<dbReference type="Pharos" id="P0C7V4">
    <property type="development level" value="Tdark"/>
</dbReference>
<dbReference type="PRO" id="PR:P0C7V4"/>
<dbReference type="Proteomes" id="UP000005640">
    <property type="component" value="Chromosome 8"/>
</dbReference>
<dbReference type="RNAct" id="P0C7V4">
    <property type="molecule type" value="protein"/>
</dbReference>
<dbReference type="InterPro" id="IPR039213">
    <property type="entry name" value="FAM90"/>
</dbReference>
<dbReference type="InterPro" id="IPR041670">
    <property type="entry name" value="Znf-CCHC_6"/>
</dbReference>
<dbReference type="PANTHER" id="PTHR16035:SF14">
    <property type="entry name" value="FAMILY WITH SEQUENCE SIMILARITY 90 MEMBER A11, PSEUDOGENE-RELATED"/>
    <property type="match status" value="1"/>
</dbReference>
<dbReference type="PANTHER" id="PTHR16035">
    <property type="entry name" value="PROTEIN FAM90A1"/>
    <property type="match status" value="1"/>
</dbReference>
<dbReference type="Pfam" id="PF15288">
    <property type="entry name" value="zf-CCHC_6"/>
    <property type="match status" value="1"/>
</dbReference>
<sequence length="464" mass="49895">MMARRDPTSWAKRLVRAQTLQKQRRAPVGPRAPPPDEEDPRLKCKNCGAFGHTARSTRCPMKCWKAALVPATLGKKEGKENLKPWKPRVEANPGPLNKDKGEKEERPRQQDPQRKALLHMFSGKPPEKPLPNGKGSTEPSDYLRVASGPMPVHTTSKRPRLDPVLADRSATEMSGRGSVLASLSPLRKASLSSSSSLGPKERQTGAAADMPQPAVRHQGREPLLVVKPTHSRPEGGCREVPQAASKTHGLLQAARPQAQDKRPAVTSQPCPPAATHSLGLGSNLSFGPGAKRPAQAPIQACLNFPKKPRLGPFQIPESAIQGGELGAPENLQPPPAATELGPSTSPQMGRRTPAQVPSVDRQPPHSRPCLPTAQACTMSHHPAASHDGAQPLRVLFRRLENGRWSSSLLAAPSFHSPEKPGAFLAQSPHVSEKSEAPCVRVPPSVLYEDLQVSSSSEDSDSDLE</sequence>
<gene>
    <name evidence="4" type="primary">FAM90A15</name>
    <name evidence="4" type="synonym">FAM90A15P</name>
</gene>
<evidence type="ECO:0000250" key="1">
    <source>
        <dbReference type="UniProtKB" id="A6NIJ5"/>
    </source>
</evidence>
<evidence type="ECO:0000256" key="2">
    <source>
        <dbReference type="SAM" id="MobiDB-lite"/>
    </source>
</evidence>
<evidence type="ECO:0000305" key="3"/>
<evidence type="ECO:0000312" key="4">
    <source>
        <dbReference type="HGNC" id="HGNC:32263"/>
    </source>
</evidence>